<accession>B9KE50</accession>
<dbReference type="EC" id="1.1.1.267" evidence="1"/>
<dbReference type="EMBL" id="CP000932">
    <property type="protein sequence ID" value="ACM64838.1"/>
    <property type="molecule type" value="Genomic_DNA"/>
</dbReference>
<dbReference type="RefSeq" id="WP_012662221.1">
    <property type="nucleotide sequence ID" value="NC_012039.1"/>
</dbReference>
<dbReference type="RefSeq" id="WP_012662222.1">
    <property type="nucleotide sequence ID" value="NC_012039.1"/>
</dbReference>
<dbReference type="SMR" id="B9KE50"/>
<dbReference type="STRING" id="306263.Cla_1535"/>
<dbReference type="KEGG" id="cla:CLA_1535"/>
<dbReference type="PATRIC" id="fig|306263.5.peg.1517"/>
<dbReference type="eggNOG" id="COG0743">
    <property type="taxonomic scope" value="Bacteria"/>
</dbReference>
<dbReference type="HOGENOM" id="CLU_035714_0_0_7"/>
<dbReference type="UniPathway" id="UPA00056">
    <property type="reaction ID" value="UER00092"/>
</dbReference>
<dbReference type="Proteomes" id="UP000007727">
    <property type="component" value="Chromosome"/>
</dbReference>
<dbReference type="GO" id="GO:0030604">
    <property type="term" value="F:1-deoxy-D-xylulose-5-phosphate reductoisomerase activity"/>
    <property type="evidence" value="ECO:0007669"/>
    <property type="project" value="UniProtKB-UniRule"/>
</dbReference>
<dbReference type="GO" id="GO:0030145">
    <property type="term" value="F:manganese ion binding"/>
    <property type="evidence" value="ECO:0007669"/>
    <property type="project" value="TreeGrafter"/>
</dbReference>
<dbReference type="GO" id="GO:0070402">
    <property type="term" value="F:NADPH binding"/>
    <property type="evidence" value="ECO:0007669"/>
    <property type="project" value="InterPro"/>
</dbReference>
<dbReference type="GO" id="GO:0051484">
    <property type="term" value="P:isopentenyl diphosphate biosynthetic process, methylerythritol 4-phosphate pathway involved in terpenoid biosynthetic process"/>
    <property type="evidence" value="ECO:0007669"/>
    <property type="project" value="TreeGrafter"/>
</dbReference>
<dbReference type="Gene3D" id="1.10.1740.10">
    <property type="match status" value="1"/>
</dbReference>
<dbReference type="Gene3D" id="3.40.50.720">
    <property type="entry name" value="NAD(P)-binding Rossmann-like Domain"/>
    <property type="match status" value="1"/>
</dbReference>
<dbReference type="HAMAP" id="MF_00183">
    <property type="entry name" value="DXP_reductoisom"/>
    <property type="match status" value="1"/>
</dbReference>
<dbReference type="InterPro" id="IPR003821">
    <property type="entry name" value="DXP_reductoisomerase"/>
</dbReference>
<dbReference type="InterPro" id="IPR013644">
    <property type="entry name" value="DXP_reductoisomerase_C"/>
</dbReference>
<dbReference type="InterPro" id="IPR013512">
    <property type="entry name" value="DXP_reductoisomerase_N"/>
</dbReference>
<dbReference type="InterPro" id="IPR026877">
    <property type="entry name" value="DXPR_C"/>
</dbReference>
<dbReference type="InterPro" id="IPR036169">
    <property type="entry name" value="DXPR_C_sf"/>
</dbReference>
<dbReference type="InterPro" id="IPR036291">
    <property type="entry name" value="NAD(P)-bd_dom_sf"/>
</dbReference>
<dbReference type="NCBIfam" id="TIGR00243">
    <property type="entry name" value="Dxr"/>
    <property type="match status" value="1"/>
</dbReference>
<dbReference type="PANTHER" id="PTHR30525">
    <property type="entry name" value="1-DEOXY-D-XYLULOSE 5-PHOSPHATE REDUCTOISOMERASE"/>
    <property type="match status" value="1"/>
</dbReference>
<dbReference type="PANTHER" id="PTHR30525:SF0">
    <property type="entry name" value="1-DEOXY-D-XYLULOSE 5-PHOSPHATE REDUCTOISOMERASE, CHLOROPLASTIC"/>
    <property type="match status" value="1"/>
</dbReference>
<dbReference type="Pfam" id="PF08436">
    <property type="entry name" value="DXP_redisom_C"/>
    <property type="match status" value="1"/>
</dbReference>
<dbReference type="Pfam" id="PF02670">
    <property type="entry name" value="DXP_reductoisom"/>
    <property type="match status" value="1"/>
</dbReference>
<dbReference type="Pfam" id="PF13288">
    <property type="entry name" value="DXPR_C"/>
    <property type="match status" value="1"/>
</dbReference>
<dbReference type="PIRSF" id="PIRSF006205">
    <property type="entry name" value="Dxp_reductismrs"/>
    <property type="match status" value="1"/>
</dbReference>
<dbReference type="SUPFAM" id="SSF69055">
    <property type="entry name" value="1-deoxy-D-xylulose-5-phosphate reductoisomerase, C-terminal domain"/>
    <property type="match status" value="1"/>
</dbReference>
<dbReference type="SUPFAM" id="SSF55347">
    <property type="entry name" value="Glyceraldehyde-3-phosphate dehydrogenase-like, C-terminal domain"/>
    <property type="match status" value="1"/>
</dbReference>
<dbReference type="SUPFAM" id="SSF51735">
    <property type="entry name" value="NAD(P)-binding Rossmann-fold domains"/>
    <property type="match status" value="1"/>
</dbReference>
<comment type="function">
    <text evidence="1">Catalyzes the NADPH-dependent rearrangement and reduction of 1-deoxy-D-xylulose-5-phosphate (DXP) to 2-C-methyl-D-erythritol 4-phosphate (MEP).</text>
</comment>
<comment type="catalytic activity">
    <reaction evidence="1">
        <text>2-C-methyl-D-erythritol 4-phosphate + NADP(+) = 1-deoxy-D-xylulose 5-phosphate + NADPH + H(+)</text>
        <dbReference type="Rhea" id="RHEA:13717"/>
        <dbReference type="ChEBI" id="CHEBI:15378"/>
        <dbReference type="ChEBI" id="CHEBI:57783"/>
        <dbReference type="ChEBI" id="CHEBI:57792"/>
        <dbReference type="ChEBI" id="CHEBI:58262"/>
        <dbReference type="ChEBI" id="CHEBI:58349"/>
        <dbReference type="EC" id="1.1.1.267"/>
    </reaction>
    <physiologicalReaction direction="right-to-left" evidence="1">
        <dbReference type="Rhea" id="RHEA:13719"/>
    </physiologicalReaction>
</comment>
<comment type="cofactor">
    <cofactor evidence="1">
        <name>Mg(2+)</name>
        <dbReference type="ChEBI" id="CHEBI:18420"/>
    </cofactor>
    <cofactor evidence="1">
        <name>Mn(2+)</name>
        <dbReference type="ChEBI" id="CHEBI:29035"/>
    </cofactor>
</comment>
<comment type="pathway">
    <text evidence="1">Isoprenoid biosynthesis; isopentenyl diphosphate biosynthesis via DXP pathway; isopentenyl diphosphate from 1-deoxy-D-xylulose 5-phosphate: step 1/6.</text>
</comment>
<comment type="similarity">
    <text evidence="1">Belongs to the DXR family.</text>
</comment>
<sequence length="359" mass="40327">MIVLGSTGSIGVNTLFIAKEKNISIEALSCGKNIKLLNEQIALFKPKFVCIQDEKDKHLVDHKNIFCAQDGLKKMISECKSKFVVNAIVGFAGLNSSLIAQKLGKTLALANKESLVVAGKFFDTSKIKAIDSEHAALKCLIDKRKDIKKLFITASGGAFYKYKIKDLKNVSVKEALKHPNWSMGAKITIDSASMCNKLFEIIEAYHLYGIKQIDAVIEKKSLVHALCEFKDGGISAYFSHANMRLSIAQAILDEHDQSFIENLDLLAMPSLKFEKISLKKYPIFMLKDELLKNPDLGVVINAANEYLVYKFLKNQMGFLDISKGIFKALDHFGVPKINQIEDVFEYDKRVRLYLDKEMK</sequence>
<organism>
    <name type="scientific">Campylobacter lari (strain RM2100 / D67 / ATCC BAA-1060)</name>
    <dbReference type="NCBI Taxonomy" id="306263"/>
    <lineage>
        <taxon>Bacteria</taxon>
        <taxon>Pseudomonadati</taxon>
        <taxon>Campylobacterota</taxon>
        <taxon>Epsilonproteobacteria</taxon>
        <taxon>Campylobacterales</taxon>
        <taxon>Campylobacteraceae</taxon>
        <taxon>Campylobacter</taxon>
    </lineage>
</organism>
<proteinExistence type="inferred from homology"/>
<protein>
    <recommendedName>
        <fullName evidence="1">1-deoxy-D-xylulose 5-phosphate reductoisomerase</fullName>
        <shortName evidence="1">DXP reductoisomerase</shortName>
        <ecNumber evidence="1">1.1.1.267</ecNumber>
    </recommendedName>
    <alternativeName>
        <fullName evidence="1">1-deoxyxylulose-5-phosphate reductoisomerase</fullName>
    </alternativeName>
    <alternativeName>
        <fullName evidence="1">2-C-methyl-D-erythritol 4-phosphate synthase</fullName>
    </alternativeName>
</protein>
<keyword id="KW-0414">Isoprene biosynthesis</keyword>
<keyword id="KW-0464">Manganese</keyword>
<keyword id="KW-0479">Metal-binding</keyword>
<keyword id="KW-0521">NADP</keyword>
<keyword id="KW-0560">Oxidoreductase</keyword>
<keyword id="KW-1185">Reference proteome</keyword>
<gene>
    <name evidence="1" type="primary">dxr</name>
    <name type="ordered locus">Cla_1535</name>
</gene>
<name>DXR_CAMLR</name>
<evidence type="ECO:0000255" key="1">
    <source>
        <dbReference type="HAMAP-Rule" id="MF_00183"/>
    </source>
</evidence>
<reference key="1">
    <citation type="journal article" date="2008" name="Foodborne Pathog. Dis.">
        <title>The complete genome sequence and analysis of the human pathogen Campylobacter lari.</title>
        <authorList>
            <person name="Miller W.G."/>
            <person name="Wang G."/>
            <person name="Binnewies T.T."/>
            <person name="Parker C.T."/>
        </authorList>
    </citation>
    <scope>NUCLEOTIDE SEQUENCE [LARGE SCALE GENOMIC DNA]</scope>
    <source>
        <strain>RM2100 / D67 / ATCC BAA-1060</strain>
    </source>
</reference>
<feature type="chain" id="PRO_1000124082" description="1-deoxy-D-xylulose 5-phosphate reductoisomerase">
    <location>
        <begin position="1"/>
        <end position="359"/>
    </location>
</feature>
<feature type="binding site" evidence="1">
    <location>
        <position position="7"/>
    </location>
    <ligand>
        <name>NADPH</name>
        <dbReference type="ChEBI" id="CHEBI:57783"/>
    </ligand>
</feature>
<feature type="binding site" evidence="1">
    <location>
        <position position="8"/>
    </location>
    <ligand>
        <name>NADPH</name>
        <dbReference type="ChEBI" id="CHEBI:57783"/>
    </ligand>
</feature>
<feature type="binding site" evidence="1">
    <location>
        <position position="9"/>
    </location>
    <ligand>
        <name>NADPH</name>
        <dbReference type="ChEBI" id="CHEBI:57783"/>
    </ligand>
</feature>
<feature type="binding site" evidence="1">
    <location>
        <position position="10"/>
    </location>
    <ligand>
        <name>NADPH</name>
        <dbReference type="ChEBI" id="CHEBI:57783"/>
    </ligand>
</feature>
<feature type="binding site" evidence="1">
    <location>
        <position position="31"/>
    </location>
    <ligand>
        <name>NADPH</name>
        <dbReference type="ChEBI" id="CHEBI:57783"/>
    </ligand>
</feature>
<feature type="binding site" evidence="1">
    <location>
        <position position="32"/>
    </location>
    <ligand>
        <name>NADPH</name>
        <dbReference type="ChEBI" id="CHEBI:57783"/>
    </ligand>
</feature>
<feature type="binding site" evidence="1">
    <location>
        <position position="33"/>
    </location>
    <ligand>
        <name>NADPH</name>
        <dbReference type="ChEBI" id="CHEBI:57783"/>
    </ligand>
</feature>
<feature type="binding site" evidence="1">
    <location>
        <position position="111"/>
    </location>
    <ligand>
        <name>NADPH</name>
        <dbReference type="ChEBI" id="CHEBI:57783"/>
    </ligand>
</feature>
<feature type="binding site" evidence="1">
    <location>
        <position position="112"/>
    </location>
    <ligand>
        <name>1-deoxy-D-xylulose 5-phosphate</name>
        <dbReference type="ChEBI" id="CHEBI:57792"/>
    </ligand>
</feature>
<feature type="binding site" evidence="1">
    <location>
        <position position="113"/>
    </location>
    <ligand>
        <name>NADPH</name>
        <dbReference type="ChEBI" id="CHEBI:57783"/>
    </ligand>
</feature>
<feature type="binding site" evidence="1">
    <location>
        <position position="131"/>
    </location>
    <ligand>
        <name>Mn(2+)</name>
        <dbReference type="ChEBI" id="CHEBI:29035"/>
    </ligand>
</feature>
<feature type="binding site" evidence="1">
    <location>
        <position position="132"/>
    </location>
    <ligand>
        <name>1-deoxy-D-xylulose 5-phosphate</name>
        <dbReference type="ChEBI" id="CHEBI:57792"/>
    </ligand>
</feature>
<feature type="binding site" evidence="1">
    <location>
        <position position="133"/>
    </location>
    <ligand>
        <name>1-deoxy-D-xylulose 5-phosphate</name>
        <dbReference type="ChEBI" id="CHEBI:57792"/>
    </ligand>
</feature>
<feature type="binding site" evidence="1">
    <location>
        <position position="133"/>
    </location>
    <ligand>
        <name>Mn(2+)</name>
        <dbReference type="ChEBI" id="CHEBI:29035"/>
    </ligand>
</feature>
<feature type="binding site" evidence="1">
    <location>
        <position position="155"/>
    </location>
    <ligand>
        <name>1-deoxy-D-xylulose 5-phosphate</name>
        <dbReference type="ChEBI" id="CHEBI:57792"/>
    </ligand>
</feature>
<feature type="binding site" evidence="1">
    <location>
        <position position="178"/>
    </location>
    <ligand>
        <name>1-deoxy-D-xylulose 5-phosphate</name>
        <dbReference type="ChEBI" id="CHEBI:57792"/>
    </ligand>
</feature>
<feature type="binding site" evidence="1">
    <location>
        <position position="184"/>
    </location>
    <ligand>
        <name>NADPH</name>
        <dbReference type="ChEBI" id="CHEBI:57783"/>
    </ligand>
</feature>
<feature type="binding site" evidence="1">
    <location>
        <position position="191"/>
    </location>
    <ligand>
        <name>1-deoxy-D-xylulose 5-phosphate</name>
        <dbReference type="ChEBI" id="CHEBI:57792"/>
    </ligand>
</feature>
<feature type="binding site" evidence="1">
    <location>
        <position position="196"/>
    </location>
    <ligand>
        <name>1-deoxy-D-xylulose 5-phosphate</name>
        <dbReference type="ChEBI" id="CHEBI:57792"/>
    </ligand>
</feature>
<feature type="binding site" evidence="1">
    <location>
        <position position="197"/>
    </location>
    <ligand>
        <name>1-deoxy-D-xylulose 5-phosphate</name>
        <dbReference type="ChEBI" id="CHEBI:57792"/>
    </ligand>
</feature>
<feature type="binding site" evidence="1">
    <location>
        <position position="200"/>
    </location>
    <ligand>
        <name>1-deoxy-D-xylulose 5-phosphate</name>
        <dbReference type="ChEBI" id="CHEBI:57792"/>
    </ligand>
</feature>
<feature type="binding site" evidence="1">
    <location>
        <position position="200"/>
    </location>
    <ligand>
        <name>Mn(2+)</name>
        <dbReference type="ChEBI" id="CHEBI:29035"/>
    </ligand>
</feature>